<proteinExistence type="evidence at transcript level"/>
<protein>
    <recommendedName>
        <fullName>U5-agatoxin-Ao1a</fullName>
        <shortName>U5-AGTX-Ao1a</shortName>
    </recommendedName>
    <alternativeName>
        <fullName>AgorTX_A3</fullName>
    </alternativeName>
</protein>
<evidence type="ECO:0000250" key="1"/>
<evidence type="ECO:0000255" key="2"/>
<sequence length="69" mass="7559">MRTIISLLLLSAMVFAVIEAISLEEGLQLFEGERGCVGENQQCADWAGPHCCSGLRCKELSIWDSRCLG</sequence>
<comment type="subcellular location">
    <subcellularLocation>
        <location evidence="1">Secreted</location>
    </subcellularLocation>
</comment>
<comment type="tissue specificity">
    <text>Expressed by the venom gland.</text>
</comment>
<comment type="PTM">
    <text>Does not contain a cysteine at position 61 which disrupts the cysteine framework.</text>
</comment>
<comment type="similarity">
    <text>Belongs to the neurotoxin 01 (U2-agtx) family.</text>
</comment>
<name>TXAG5_AGEOR</name>
<keyword id="KW-0027">Amidation</keyword>
<keyword id="KW-1015">Disulfide bond</keyword>
<keyword id="KW-0964">Secreted</keyword>
<keyword id="KW-0732">Signal</keyword>
<keyword id="KW-0800">Toxin</keyword>
<organism>
    <name type="scientific">Agelena orientalis</name>
    <name type="common">Funnel-web spider</name>
    <dbReference type="NCBI Taxonomy" id="293813"/>
    <lineage>
        <taxon>Eukaryota</taxon>
        <taxon>Metazoa</taxon>
        <taxon>Ecdysozoa</taxon>
        <taxon>Arthropoda</taxon>
        <taxon>Chelicerata</taxon>
        <taxon>Arachnida</taxon>
        <taxon>Araneae</taxon>
        <taxon>Araneomorphae</taxon>
        <taxon>Entelegynae</taxon>
        <taxon>Agelenidae</taxon>
        <taxon>Agelena</taxon>
    </lineage>
</organism>
<dbReference type="EMBL" id="AY681323">
    <property type="protein sequence ID" value="AAU93679.1"/>
    <property type="molecule type" value="mRNA"/>
</dbReference>
<dbReference type="SMR" id="Q5Y4W1"/>
<dbReference type="ArachnoServer" id="AS000089">
    <property type="toxin name" value="U5-agatoxin-Ao1a"/>
</dbReference>
<dbReference type="GO" id="GO:0005576">
    <property type="term" value="C:extracellular region"/>
    <property type="evidence" value="ECO:0007669"/>
    <property type="project" value="UniProtKB-SubCell"/>
</dbReference>
<dbReference type="GO" id="GO:0090729">
    <property type="term" value="F:toxin activity"/>
    <property type="evidence" value="ECO:0007669"/>
    <property type="project" value="UniProtKB-KW"/>
</dbReference>
<dbReference type="Pfam" id="PF05980">
    <property type="entry name" value="Toxin_7"/>
    <property type="match status" value="1"/>
</dbReference>
<dbReference type="SUPFAM" id="SSF57059">
    <property type="entry name" value="omega toxin-like"/>
    <property type="match status" value="1"/>
</dbReference>
<accession>Q5Y4W1</accession>
<feature type="signal peptide" evidence="2">
    <location>
        <begin position="1"/>
        <end position="20"/>
    </location>
</feature>
<feature type="propeptide" id="PRO_5000093649" evidence="1">
    <location>
        <begin position="21"/>
        <end position="34"/>
    </location>
</feature>
<feature type="chain" id="PRO_5000093650" description="U5-agatoxin-Ao1a">
    <location>
        <begin position="35"/>
        <end position="69"/>
    </location>
</feature>
<feature type="disulfide bond" evidence="1">
    <location>
        <begin position="36"/>
        <end position="52"/>
    </location>
</feature>
<feature type="disulfide bond" evidence="1">
    <location>
        <begin position="43"/>
        <end position="57"/>
    </location>
</feature>
<reference key="1">
    <citation type="journal article" date="2005" name="Proteins">
        <title>A novel strategy for the identification of toxinlike structures in spider venom.</title>
        <authorList>
            <person name="Kozlov S.A."/>
            <person name="Malyavka A."/>
            <person name="McCutchen B."/>
            <person name="Lu A."/>
            <person name="Schepers E."/>
            <person name="Herrmann R."/>
            <person name="Grishin E.V."/>
        </authorList>
    </citation>
    <scope>NUCLEOTIDE SEQUENCE [MRNA]</scope>
    <source>
        <tissue>Venom gland</tissue>
    </source>
</reference>